<protein>
    <recommendedName>
        <fullName evidence="1">L-rhamnose mutarotase</fullName>
        <ecNumber evidence="1">5.1.3.32</ecNumber>
    </recommendedName>
    <alternativeName>
        <fullName evidence="1">Rhamnose 1-epimerase</fullName>
    </alternativeName>
    <alternativeName>
        <fullName evidence="1">Type-3 mutarotase</fullName>
    </alternativeName>
</protein>
<gene>
    <name evidence="1" type="primary">rhaM</name>
    <name type="ordered locus">LMOf2365_2836</name>
</gene>
<sequence>MERVASIMYLYPGNQEEYKKRHDALWPEMKEALKAHGAANYSIFLDEKTDTLFAYVEVEDKAIYDKIAETEICQKWWKYMAPIMKSNPNNSPVALDLKEVFYLA</sequence>
<reference key="1">
    <citation type="journal article" date="2004" name="Nucleic Acids Res.">
        <title>Whole genome comparisons of serotype 4b and 1/2a strains of the food-borne pathogen Listeria monocytogenes reveal new insights into the core genome components of this species.</title>
        <authorList>
            <person name="Nelson K.E."/>
            <person name="Fouts D.E."/>
            <person name="Mongodin E.F."/>
            <person name="Ravel J."/>
            <person name="DeBoy R.T."/>
            <person name="Kolonay J.F."/>
            <person name="Rasko D.A."/>
            <person name="Angiuoli S.V."/>
            <person name="Gill S.R."/>
            <person name="Paulsen I.T."/>
            <person name="Peterson J.D."/>
            <person name="White O."/>
            <person name="Nelson W.C."/>
            <person name="Nierman W.C."/>
            <person name="Beanan M.J."/>
            <person name="Brinkac L.M."/>
            <person name="Daugherty S.C."/>
            <person name="Dodson R.J."/>
            <person name="Durkin A.S."/>
            <person name="Madupu R."/>
            <person name="Haft D.H."/>
            <person name="Selengut J."/>
            <person name="Van Aken S.E."/>
            <person name="Khouri H.M."/>
            <person name="Fedorova N."/>
            <person name="Forberger H.A."/>
            <person name="Tran B."/>
            <person name="Kathariou S."/>
            <person name="Wonderling L.D."/>
            <person name="Uhlich G.A."/>
            <person name="Bayles D.O."/>
            <person name="Luchansky J.B."/>
            <person name="Fraser C.M."/>
        </authorList>
    </citation>
    <scope>NUCLEOTIDE SEQUENCE [LARGE SCALE GENOMIC DNA]</scope>
    <source>
        <strain>F2365</strain>
    </source>
</reference>
<evidence type="ECO:0000255" key="1">
    <source>
        <dbReference type="HAMAP-Rule" id="MF_01663"/>
    </source>
</evidence>
<feature type="chain" id="PRO_0000344587" description="L-rhamnose mutarotase">
    <location>
        <begin position="1"/>
        <end position="104"/>
    </location>
</feature>
<feature type="active site" description="Proton donor" evidence="1">
    <location>
        <position position="22"/>
    </location>
</feature>
<feature type="binding site" evidence="1">
    <location>
        <position position="18"/>
    </location>
    <ligand>
        <name>substrate</name>
    </ligand>
</feature>
<feature type="binding site" evidence="1">
    <location>
        <position position="41"/>
    </location>
    <ligand>
        <name>substrate</name>
    </ligand>
</feature>
<feature type="binding site" evidence="1">
    <location>
        <begin position="76"/>
        <end position="77"/>
    </location>
    <ligand>
        <name>substrate</name>
    </ligand>
</feature>
<dbReference type="EC" id="5.1.3.32" evidence="1"/>
<dbReference type="EMBL" id="AE017262">
    <property type="protein sequence ID" value="AAT05600.1"/>
    <property type="molecule type" value="Genomic_DNA"/>
</dbReference>
<dbReference type="RefSeq" id="WP_003725794.1">
    <property type="nucleotide sequence ID" value="NC_002973.6"/>
</dbReference>
<dbReference type="SMR" id="Q71VR6"/>
<dbReference type="KEGG" id="lmf:LMOf2365_2836"/>
<dbReference type="HOGENOM" id="CLU_100689_2_0_9"/>
<dbReference type="UniPathway" id="UPA00125"/>
<dbReference type="GO" id="GO:0005737">
    <property type="term" value="C:cytoplasm"/>
    <property type="evidence" value="ECO:0007669"/>
    <property type="project" value="UniProtKB-SubCell"/>
</dbReference>
<dbReference type="GO" id="GO:0062192">
    <property type="term" value="F:L-rhamnose mutarotase activity"/>
    <property type="evidence" value="ECO:0007669"/>
    <property type="project" value="UniProtKB-EC"/>
</dbReference>
<dbReference type="GO" id="GO:0019301">
    <property type="term" value="P:rhamnose catabolic process"/>
    <property type="evidence" value="ECO:0007669"/>
    <property type="project" value="TreeGrafter"/>
</dbReference>
<dbReference type="Gene3D" id="3.30.70.100">
    <property type="match status" value="1"/>
</dbReference>
<dbReference type="HAMAP" id="MF_01663">
    <property type="entry name" value="L_rham_rotase"/>
    <property type="match status" value="1"/>
</dbReference>
<dbReference type="InterPro" id="IPR011008">
    <property type="entry name" value="Dimeric_a/b-barrel"/>
</dbReference>
<dbReference type="InterPro" id="IPR013448">
    <property type="entry name" value="L-rhamnose_mutarotase"/>
</dbReference>
<dbReference type="InterPro" id="IPR008000">
    <property type="entry name" value="Rham/fucose_mutarotase"/>
</dbReference>
<dbReference type="NCBIfam" id="TIGR02625">
    <property type="entry name" value="YiiL_rotase"/>
    <property type="match status" value="1"/>
</dbReference>
<dbReference type="PANTHER" id="PTHR34389">
    <property type="entry name" value="L-RHAMNOSE MUTAROTASE"/>
    <property type="match status" value="1"/>
</dbReference>
<dbReference type="PANTHER" id="PTHR34389:SF2">
    <property type="entry name" value="L-RHAMNOSE MUTAROTASE"/>
    <property type="match status" value="1"/>
</dbReference>
<dbReference type="Pfam" id="PF05336">
    <property type="entry name" value="rhaM"/>
    <property type="match status" value="1"/>
</dbReference>
<dbReference type="SUPFAM" id="SSF54909">
    <property type="entry name" value="Dimeric alpha+beta barrel"/>
    <property type="match status" value="1"/>
</dbReference>
<organism>
    <name type="scientific">Listeria monocytogenes serotype 4b (strain F2365)</name>
    <dbReference type="NCBI Taxonomy" id="265669"/>
    <lineage>
        <taxon>Bacteria</taxon>
        <taxon>Bacillati</taxon>
        <taxon>Bacillota</taxon>
        <taxon>Bacilli</taxon>
        <taxon>Bacillales</taxon>
        <taxon>Listeriaceae</taxon>
        <taxon>Listeria</taxon>
    </lineage>
</organism>
<accession>Q71VR6</accession>
<proteinExistence type="inferred from homology"/>
<name>RHAM_LISMF</name>
<keyword id="KW-0119">Carbohydrate metabolism</keyword>
<keyword id="KW-0963">Cytoplasm</keyword>
<keyword id="KW-0413">Isomerase</keyword>
<keyword id="KW-0684">Rhamnose metabolism</keyword>
<comment type="function">
    <text evidence="1">Involved in the anomeric conversion of L-rhamnose.</text>
</comment>
<comment type="catalytic activity">
    <reaction evidence="1">
        <text>alpha-L-rhamnose = beta-L-rhamnose</text>
        <dbReference type="Rhea" id="RHEA:25584"/>
        <dbReference type="ChEBI" id="CHEBI:27586"/>
        <dbReference type="ChEBI" id="CHEBI:27907"/>
        <dbReference type="EC" id="5.1.3.32"/>
    </reaction>
</comment>
<comment type="pathway">
    <text evidence="1">Carbohydrate metabolism; L-rhamnose metabolism.</text>
</comment>
<comment type="subunit">
    <text evidence="1">Homodimer.</text>
</comment>
<comment type="subcellular location">
    <subcellularLocation>
        <location evidence="1">Cytoplasm</location>
    </subcellularLocation>
</comment>
<comment type="similarity">
    <text evidence="1">Belongs to the rhamnose mutarotase family.</text>
</comment>